<proteinExistence type="inferred from homology"/>
<organism>
    <name type="scientific">Shewanella denitrificans (strain OS217 / ATCC BAA-1090 / DSM 15013)</name>
    <dbReference type="NCBI Taxonomy" id="318161"/>
    <lineage>
        <taxon>Bacteria</taxon>
        <taxon>Pseudomonadati</taxon>
        <taxon>Pseudomonadota</taxon>
        <taxon>Gammaproteobacteria</taxon>
        <taxon>Alteromonadales</taxon>
        <taxon>Shewanellaceae</taxon>
        <taxon>Shewanella</taxon>
    </lineage>
</organism>
<name>EX7L_SHEDO</name>
<comment type="function">
    <text evidence="1">Bidirectionally degrades single-stranded DNA into large acid-insoluble oligonucleotides, which are then degraded further into small acid-soluble oligonucleotides.</text>
</comment>
<comment type="catalytic activity">
    <reaction evidence="1">
        <text>Exonucleolytic cleavage in either 5'- to 3'- or 3'- to 5'-direction to yield nucleoside 5'-phosphates.</text>
        <dbReference type="EC" id="3.1.11.6"/>
    </reaction>
</comment>
<comment type="subunit">
    <text evidence="1">Heterooligomer composed of large and small subunits.</text>
</comment>
<comment type="subcellular location">
    <subcellularLocation>
        <location evidence="1">Cytoplasm</location>
    </subcellularLocation>
</comment>
<comment type="similarity">
    <text evidence="1">Belongs to the XseA family.</text>
</comment>
<gene>
    <name evidence="1" type="primary">xseA</name>
    <name type="ordered locus">Sden_1268</name>
</gene>
<protein>
    <recommendedName>
        <fullName evidence="1">Exodeoxyribonuclease 7 large subunit</fullName>
        <ecNumber evidence="1">3.1.11.6</ecNumber>
    </recommendedName>
    <alternativeName>
        <fullName evidence="1">Exodeoxyribonuclease VII large subunit</fullName>
        <shortName evidence="1">Exonuclease VII large subunit</shortName>
    </alternativeName>
</protein>
<feature type="chain" id="PRO_0000273684" description="Exodeoxyribonuclease 7 large subunit">
    <location>
        <begin position="1"/>
        <end position="446"/>
    </location>
</feature>
<dbReference type="EC" id="3.1.11.6" evidence="1"/>
<dbReference type="EMBL" id="CP000302">
    <property type="protein sequence ID" value="ABE54554.1"/>
    <property type="molecule type" value="Genomic_DNA"/>
</dbReference>
<dbReference type="RefSeq" id="WP_011495713.1">
    <property type="nucleotide sequence ID" value="NC_007954.1"/>
</dbReference>
<dbReference type="SMR" id="Q12PS2"/>
<dbReference type="STRING" id="318161.Sden_1268"/>
<dbReference type="KEGG" id="sdn:Sden_1268"/>
<dbReference type="eggNOG" id="COG1570">
    <property type="taxonomic scope" value="Bacteria"/>
</dbReference>
<dbReference type="HOGENOM" id="CLU_023625_3_1_6"/>
<dbReference type="OrthoDB" id="9802795at2"/>
<dbReference type="Proteomes" id="UP000001982">
    <property type="component" value="Chromosome"/>
</dbReference>
<dbReference type="GO" id="GO:0005737">
    <property type="term" value="C:cytoplasm"/>
    <property type="evidence" value="ECO:0007669"/>
    <property type="project" value="UniProtKB-SubCell"/>
</dbReference>
<dbReference type="GO" id="GO:0009318">
    <property type="term" value="C:exodeoxyribonuclease VII complex"/>
    <property type="evidence" value="ECO:0007669"/>
    <property type="project" value="InterPro"/>
</dbReference>
<dbReference type="GO" id="GO:0008855">
    <property type="term" value="F:exodeoxyribonuclease VII activity"/>
    <property type="evidence" value="ECO:0007669"/>
    <property type="project" value="UniProtKB-UniRule"/>
</dbReference>
<dbReference type="GO" id="GO:0003676">
    <property type="term" value="F:nucleic acid binding"/>
    <property type="evidence" value="ECO:0007669"/>
    <property type="project" value="InterPro"/>
</dbReference>
<dbReference type="GO" id="GO:0006308">
    <property type="term" value="P:DNA catabolic process"/>
    <property type="evidence" value="ECO:0007669"/>
    <property type="project" value="UniProtKB-UniRule"/>
</dbReference>
<dbReference type="CDD" id="cd04489">
    <property type="entry name" value="ExoVII_LU_OBF"/>
    <property type="match status" value="1"/>
</dbReference>
<dbReference type="HAMAP" id="MF_00378">
    <property type="entry name" value="Exonuc_7_L"/>
    <property type="match status" value="1"/>
</dbReference>
<dbReference type="InterPro" id="IPR003753">
    <property type="entry name" value="Exonuc_VII_L"/>
</dbReference>
<dbReference type="InterPro" id="IPR020579">
    <property type="entry name" value="Exonuc_VII_lsu_C"/>
</dbReference>
<dbReference type="InterPro" id="IPR025824">
    <property type="entry name" value="OB-fold_nuc-bd_dom"/>
</dbReference>
<dbReference type="NCBIfam" id="TIGR00237">
    <property type="entry name" value="xseA"/>
    <property type="match status" value="1"/>
</dbReference>
<dbReference type="PANTHER" id="PTHR30008">
    <property type="entry name" value="EXODEOXYRIBONUCLEASE 7 LARGE SUBUNIT"/>
    <property type="match status" value="1"/>
</dbReference>
<dbReference type="PANTHER" id="PTHR30008:SF0">
    <property type="entry name" value="EXODEOXYRIBONUCLEASE 7 LARGE SUBUNIT"/>
    <property type="match status" value="1"/>
</dbReference>
<dbReference type="Pfam" id="PF02601">
    <property type="entry name" value="Exonuc_VII_L"/>
    <property type="match status" value="1"/>
</dbReference>
<dbReference type="Pfam" id="PF13742">
    <property type="entry name" value="tRNA_anti_2"/>
    <property type="match status" value="1"/>
</dbReference>
<accession>Q12PS2</accession>
<sequence>MKAAKNNVYTVSRLNGEVRQILEGQIGKIWLNGEISNFSSPSSGHWYLTLKDTHSQIRCAMFKGRNQSVNFRPVNGQQVLVKGAISVYEPRGDYQLLLESMLPAGDGLLAQEYEALKMKLAAEGLFASETKRALPSNIQRIGIITSATGAALRDVLHVLQRRDASIEVVVYPTQVQGTSASDNICRAIELANKRLEVDVLLLTRGGGSLEDLWCFNNEMLAHSIYNSALPVVSAVGHEVDTTISDYVADVRAPTPSAGAELLSQDKGNKAQKLALMLSRLAQGMRHYQLSQDKHFVNLQHRLNQQDPKRRLQQLEQQFDEFQLRLDNAFKHRLSRLTLRHERLSAQLQRQSPEHKLRLAHQALTHVSGRFDDAIKDTLGSAEQRLKQAVHQLEAMSPLATLSRGYSISSNANGKVITDASKVKVGDSLHTRLAKGQLVSTVIDVEM</sequence>
<reference key="1">
    <citation type="submission" date="2006-03" db="EMBL/GenBank/DDBJ databases">
        <title>Complete sequence of Shewanella denitrificans OS217.</title>
        <authorList>
            <consortium name="US DOE Joint Genome Institute"/>
            <person name="Copeland A."/>
            <person name="Lucas S."/>
            <person name="Lapidus A."/>
            <person name="Barry K."/>
            <person name="Detter J.C."/>
            <person name="Glavina del Rio T."/>
            <person name="Hammon N."/>
            <person name="Israni S."/>
            <person name="Dalin E."/>
            <person name="Tice H."/>
            <person name="Pitluck S."/>
            <person name="Brettin T."/>
            <person name="Bruce D."/>
            <person name="Han C."/>
            <person name="Tapia R."/>
            <person name="Gilna P."/>
            <person name="Kiss H."/>
            <person name="Schmutz J."/>
            <person name="Larimer F."/>
            <person name="Land M."/>
            <person name="Hauser L."/>
            <person name="Kyrpides N."/>
            <person name="Lykidis A."/>
            <person name="Richardson P."/>
        </authorList>
    </citation>
    <scope>NUCLEOTIDE SEQUENCE [LARGE SCALE GENOMIC DNA]</scope>
    <source>
        <strain>OS217 / ATCC BAA-1090 / DSM 15013</strain>
    </source>
</reference>
<keyword id="KW-0963">Cytoplasm</keyword>
<keyword id="KW-0269">Exonuclease</keyword>
<keyword id="KW-0378">Hydrolase</keyword>
<keyword id="KW-0540">Nuclease</keyword>
<keyword id="KW-1185">Reference proteome</keyword>
<evidence type="ECO:0000255" key="1">
    <source>
        <dbReference type="HAMAP-Rule" id="MF_00378"/>
    </source>
</evidence>